<gene>
    <name evidence="1" type="primary">yggX</name>
    <name type="ordered locus">EC55989_3255</name>
</gene>
<sequence length="91" mass="10953">MSRTIFCTFLQREAEGQDFQLYPGELGKRIYNEISKEAWAQWQHKQTMLINEKKLNMMNAEHRKLLEQEMVNFLFEGKEVHIEGYTPEDKK</sequence>
<comment type="function">
    <text evidence="1">Could be a mediator in iron transactions between iron acquisition and iron-requiring processes, such as synthesis and/or repair of Fe-S clusters in biosynthetic enzymes.</text>
</comment>
<comment type="subunit">
    <text evidence="1">Monomer.</text>
</comment>
<comment type="similarity">
    <text evidence="1">Belongs to the Fe(2+)-trafficking protein family.</text>
</comment>
<proteinExistence type="inferred from homology"/>
<keyword id="KW-0408">Iron</keyword>
<keyword id="KW-1185">Reference proteome</keyword>
<name>FETP_ECO55</name>
<protein>
    <recommendedName>
        <fullName evidence="1">Probable Fe(2+)-trafficking protein</fullName>
    </recommendedName>
</protein>
<reference key="1">
    <citation type="journal article" date="2009" name="PLoS Genet.">
        <title>Organised genome dynamics in the Escherichia coli species results in highly diverse adaptive paths.</title>
        <authorList>
            <person name="Touchon M."/>
            <person name="Hoede C."/>
            <person name="Tenaillon O."/>
            <person name="Barbe V."/>
            <person name="Baeriswyl S."/>
            <person name="Bidet P."/>
            <person name="Bingen E."/>
            <person name="Bonacorsi S."/>
            <person name="Bouchier C."/>
            <person name="Bouvet O."/>
            <person name="Calteau A."/>
            <person name="Chiapello H."/>
            <person name="Clermont O."/>
            <person name="Cruveiller S."/>
            <person name="Danchin A."/>
            <person name="Diard M."/>
            <person name="Dossat C."/>
            <person name="Karoui M.E."/>
            <person name="Frapy E."/>
            <person name="Garry L."/>
            <person name="Ghigo J.M."/>
            <person name="Gilles A.M."/>
            <person name="Johnson J."/>
            <person name="Le Bouguenec C."/>
            <person name="Lescat M."/>
            <person name="Mangenot S."/>
            <person name="Martinez-Jehanne V."/>
            <person name="Matic I."/>
            <person name="Nassif X."/>
            <person name="Oztas S."/>
            <person name="Petit M.A."/>
            <person name="Pichon C."/>
            <person name="Rouy Z."/>
            <person name="Ruf C.S."/>
            <person name="Schneider D."/>
            <person name="Tourret J."/>
            <person name="Vacherie B."/>
            <person name="Vallenet D."/>
            <person name="Medigue C."/>
            <person name="Rocha E.P.C."/>
            <person name="Denamur E."/>
        </authorList>
    </citation>
    <scope>NUCLEOTIDE SEQUENCE [LARGE SCALE GENOMIC DNA]</scope>
    <source>
        <strain>55989 / EAEC</strain>
    </source>
</reference>
<feature type="chain" id="PRO_1000147765" description="Probable Fe(2+)-trafficking protein">
    <location>
        <begin position="1"/>
        <end position="91"/>
    </location>
</feature>
<dbReference type="EMBL" id="CU928145">
    <property type="protein sequence ID" value="CAU99260.1"/>
    <property type="molecule type" value="Genomic_DNA"/>
</dbReference>
<dbReference type="RefSeq" id="WP_000091700.1">
    <property type="nucleotide sequence ID" value="NZ_CP028304.1"/>
</dbReference>
<dbReference type="SMR" id="B7LFM5"/>
<dbReference type="KEGG" id="eck:EC55989_3255"/>
<dbReference type="HOGENOM" id="CLU_170994_0_0_6"/>
<dbReference type="Proteomes" id="UP000000746">
    <property type="component" value="Chromosome"/>
</dbReference>
<dbReference type="GO" id="GO:0005829">
    <property type="term" value="C:cytosol"/>
    <property type="evidence" value="ECO:0007669"/>
    <property type="project" value="TreeGrafter"/>
</dbReference>
<dbReference type="GO" id="GO:0005506">
    <property type="term" value="F:iron ion binding"/>
    <property type="evidence" value="ECO:0007669"/>
    <property type="project" value="UniProtKB-UniRule"/>
</dbReference>
<dbReference type="GO" id="GO:0034599">
    <property type="term" value="P:cellular response to oxidative stress"/>
    <property type="evidence" value="ECO:0007669"/>
    <property type="project" value="TreeGrafter"/>
</dbReference>
<dbReference type="FunFam" id="1.10.3880.10:FF:000001">
    <property type="entry name" value="Probable Fe(2+)-trafficking protein"/>
    <property type="match status" value="1"/>
</dbReference>
<dbReference type="Gene3D" id="1.10.3880.10">
    <property type="entry name" value="Fe(II) trafficking protein YggX"/>
    <property type="match status" value="1"/>
</dbReference>
<dbReference type="HAMAP" id="MF_00686">
    <property type="entry name" value="Fe_traffic_YggX"/>
    <property type="match status" value="1"/>
</dbReference>
<dbReference type="InterPro" id="IPR007457">
    <property type="entry name" value="Fe_traffick_prot_YggX"/>
</dbReference>
<dbReference type="InterPro" id="IPR036766">
    <property type="entry name" value="Fe_traffick_prot_YggX_sf"/>
</dbReference>
<dbReference type="NCBIfam" id="NF003817">
    <property type="entry name" value="PRK05408.1"/>
    <property type="match status" value="1"/>
</dbReference>
<dbReference type="PANTHER" id="PTHR36965">
    <property type="entry name" value="FE(2+)-TRAFFICKING PROTEIN-RELATED"/>
    <property type="match status" value="1"/>
</dbReference>
<dbReference type="PANTHER" id="PTHR36965:SF1">
    <property type="entry name" value="FE(2+)-TRAFFICKING PROTEIN-RELATED"/>
    <property type="match status" value="1"/>
</dbReference>
<dbReference type="Pfam" id="PF04362">
    <property type="entry name" value="Iron_traffic"/>
    <property type="match status" value="1"/>
</dbReference>
<dbReference type="PIRSF" id="PIRSF029827">
    <property type="entry name" value="Fe_traffic_YggX"/>
    <property type="match status" value="1"/>
</dbReference>
<dbReference type="SUPFAM" id="SSF111148">
    <property type="entry name" value="YggX-like"/>
    <property type="match status" value="1"/>
</dbReference>
<evidence type="ECO:0000255" key="1">
    <source>
        <dbReference type="HAMAP-Rule" id="MF_00686"/>
    </source>
</evidence>
<accession>B7LFM5</accession>
<organism>
    <name type="scientific">Escherichia coli (strain 55989 / EAEC)</name>
    <dbReference type="NCBI Taxonomy" id="585055"/>
    <lineage>
        <taxon>Bacteria</taxon>
        <taxon>Pseudomonadati</taxon>
        <taxon>Pseudomonadota</taxon>
        <taxon>Gammaproteobacteria</taxon>
        <taxon>Enterobacterales</taxon>
        <taxon>Enterobacteriaceae</taxon>
        <taxon>Escherichia</taxon>
    </lineage>
</organism>